<keyword id="KW-0963">Cytoplasm</keyword>
<keyword id="KW-0369">Histidine metabolism</keyword>
<keyword id="KW-0456">Lyase</keyword>
<feature type="chain" id="PRO_1000078228" description="Histidine ammonia-lyase">
    <location>
        <begin position="1"/>
        <end position="506"/>
    </location>
</feature>
<feature type="modified residue" description="2,3-didehydroalanine (Ser)" evidence="1">
    <location>
        <position position="144"/>
    </location>
</feature>
<feature type="cross-link" description="5-imidazolinone (Ala-Gly)" evidence="1">
    <location>
        <begin position="143"/>
        <end position="145"/>
    </location>
</feature>
<proteinExistence type="inferred from homology"/>
<dbReference type="EC" id="4.3.1.3" evidence="1"/>
<dbReference type="EMBL" id="CP000886">
    <property type="protein sequence ID" value="ABX68106.1"/>
    <property type="molecule type" value="Genomic_DNA"/>
</dbReference>
<dbReference type="RefSeq" id="WP_001095228.1">
    <property type="nucleotide sequence ID" value="NC_010102.1"/>
</dbReference>
<dbReference type="SMR" id="A9MTJ1"/>
<dbReference type="KEGG" id="spq:SPAB_02728"/>
<dbReference type="PATRIC" id="fig|1016998.12.peg.2581"/>
<dbReference type="HOGENOM" id="CLU_014801_4_0_6"/>
<dbReference type="BioCyc" id="SENT1016998:SPAB_RS11085-MONOMER"/>
<dbReference type="UniPathway" id="UPA00379">
    <property type="reaction ID" value="UER00549"/>
</dbReference>
<dbReference type="Proteomes" id="UP000008556">
    <property type="component" value="Chromosome"/>
</dbReference>
<dbReference type="GO" id="GO:0005737">
    <property type="term" value="C:cytoplasm"/>
    <property type="evidence" value="ECO:0007669"/>
    <property type="project" value="UniProtKB-SubCell"/>
</dbReference>
<dbReference type="GO" id="GO:0004397">
    <property type="term" value="F:histidine ammonia-lyase activity"/>
    <property type="evidence" value="ECO:0007669"/>
    <property type="project" value="UniProtKB-UniRule"/>
</dbReference>
<dbReference type="GO" id="GO:0019556">
    <property type="term" value="P:L-histidine catabolic process to glutamate and formamide"/>
    <property type="evidence" value="ECO:0007669"/>
    <property type="project" value="UniProtKB-UniPathway"/>
</dbReference>
<dbReference type="GO" id="GO:0019557">
    <property type="term" value="P:L-histidine catabolic process to glutamate and formate"/>
    <property type="evidence" value="ECO:0007669"/>
    <property type="project" value="UniProtKB-UniPathway"/>
</dbReference>
<dbReference type="CDD" id="cd00332">
    <property type="entry name" value="PAL-HAL"/>
    <property type="match status" value="1"/>
</dbReference>
<dbReference type="FunFam" id="1.10.275.10:FF:000005">
    <property type="entry name" value="Histidine ammonia-lyase"/>
    <property type="match status" value="1"/>
</dbReference>
<dbReference type="FunFam" id="1.20.200.10:FF:000003">
    <property type="entry name" value="Histidine ammonia-lyase"/>
    <property type="match status" value="1"/>
</dbReference>
<dbReference type="Gene3D" id="1.20.200.10">
    <property type="entry name" value="Fumarase/aspartase (Central domain)"/>
    <property type="match status" value="1"/>
</dbReference>
<dbReference type="Gene3D" id="1.10.275.10">
    <property type="entry name" value="Fumarase/aspartase (N-terminal domain)"/>
    <property type="match status" value="1"/>
</dbReference>
<dbReference type="HAMAP" id="MF_00229">
    <property type="entry name" value="His_ammonia_lyase"/>
    <property type="match status" value="1"/>
</dbReference>
<dbReference type="InterPro" id="IPR001106">
    <property type="entry name" value="Aromatic_Lyase"/>
</dbReference>
<dbReference type="InterPro" id="IPR024083">
    <property type="entry name" value="Fumarase/histidase_N"/>
</dbReference>
<dbReference type="InterPro" id="IPR005921">
    <property type="entry name" value="HutH"/>
</dbReference>
<dbReference type="InterPro" id="IPR008948">
    <property type="entry name" value="L-Aspartase-like"/>
</dbReference>
<dbReference type="InterPro" id="IPR022313">
    <property type="entry name" value="Phe/His_NH3-lyase_AS"/>
</dbReference>
<dbReference type="NCBIfam" id="TIGR01225">
    <property type="entry name" value="hutH"/>
    <property type="match status" value="1"/>
</dbReference>
<dbReference type="NCBIfam" id="NF006871">
    <property type="entry name" value="PRK09367.1"/>
    <property type="match status" value="1"/>
</dbReference>
<dbReference type="PANTHER" id="PTHR10362">
    <property type="entry name" value="HISTIDINE AMMONIA-LYASE"/>
    <property type="match status" value="1"/>
</dbReference>
<dbReference type="Pfam" id="PF00221">
    <property type="entry name" value="Lyase_aromatic"/>
    <property type="match status" value="1"/>
</dbReference>
<dbReference type="SUPFAM" id="SSF48557">
    <property type="entry name" value="L-aspartase-like"/>
    <property type="match status" value="1"/>
</dbReference>
<dbReference type="PROSITE" id="PS00488">
    <property type="entry name" value="PAL_HISTIDASE"/>
    <property type="match status" value="1"/>
</dbReference>
<organism>
    <name type="scientific">Salmonella paratyphi B (strain ATCC BAA-1250 / SPB7)</name>
    <dbReference type="NCBI Taxonomy" id="1016998"/>
    <lineage>
        <taxon>Bacteria</taxon>
        <taxon>Pseudomonadati</taxon>
        <taxon>Pseudomonadota</taxon>
        <taxon>Gammaproteobacteria</taxon>
        <taxon>Enterobacterales</taxon>
        <taxon>Enterobacteriaceae</taxon>
        <taxon>Salmonella</taxon>
    </lineage>
</organism>
<sequence>MNTMTLTPGQLSLSQLYDIWRHPVQLRLDASAIDGINASVACVNDIVAEGRTAYGINTGFGLLAQTRIADEDLQNLQRSLVLSHAAGVGDPLDDAMVRLIMVLKINSLARGFSGIRLSVIEALIALVNAGVYPLIPAKGSVGASGDLAPLAHLSLTLLGEGKARWQGEWLPAQTALKKAGLEPVALAAKEGLALLNGTQASTAFALRGLFEAQELFASAVVCGALTTEAVLGSRRPFDARIHAARGQQGQIDVARLFRHLLTDTSAIAESHHHCHKVQDPYSLRCQPQVMGACLTQLRQTKEVLLAEANAVSDNPLVFADAGEVISGGNFHAEPVAMVADNLALAIAEIGALSERRIALMMDKHMSQLPPFLVKNGGVNSGFMIAQVTAAALASENKALAHPHSVDSLPTSANQEDHVSMAPAAGRRLWEMAANTRGIIAVEWLAACQGIDLREGLTSSPLLEQARQTLRERVAHYTQDRFFAPDIECATALLAQGALQRLVPDFM</sequence>
<protein>
    <recommendedName>
        <fullName evidence="1">Histidine ammonia-lyase</fullName>
        <shortName evidence="1">Histidase</shortName>
        <ecNumber evidence="1">4.3.1.3</ecNumber>
    </recommendedName>
</protein>
<gene>
    <name evidence="1" type="primary">hutH</name>
    <name type="ordered locus">SPAB_02728</name>
</gene>
<comment type="catalytic activity">
    <reaction evidence="1">
        <text>L-histidine = trans-urocanate + NH4(+)</text>
        <dbReference type="Rhea" id="RHEA:21232"/>
        <dbReference type="ChEBI" id="CHEBI:17771"/>
        <dbReference type="ChEBI" id="CHEBI:28938"/>
        <dbReference type="ChEBI" id="CHEBI:57595"/>
        <dbReference type="EC" id="4.3.1.3"/>
    </reaction>
</comment>
<comment type="pathway">
    <text evidence="1">Amino-acid degradation; L-histidine degradation into L-glutamate; N-formimidoyl-L-glutamate from L-histidine: step 1/3.</text>
</comment>
<comment type="subcellular location">
    <subcellularLocation>
        <location evidence="1">Cytoplasm</location>
    </subcellularLocation>
</comment>
<comment type="PTM">
    <text evidence="1">Contains an active site 4-methylidene-imidazol-5-one (MIO), which is formed autocatalytically by cyclization and dehydration of residues Ala-Ser-Gly.</text>
</comment>
<comment type="similarity">
    <text evidence="1">Belongs to the PAL/histidase family.</text>
</comment>
<name>HUTH_SALPB</name>
<accession>A9MTJ1</accession>
<evidence type="ECO:0000255" key="1">
    <source>
        <dbReference type="HAMAP-Rule" id="MF_00229"/>
    </source>
</evidence>
<reference key="1">
    <citation type="submission" date="2007-11" db="EMBL/GenBank/DDBJ databases">
        <authorList>
            <consortium name="The Salmonella enterica serovar Paratyphi B Genome Sequencing Project"/>
            <person name="McClelland M."/>
            <person name="Sanderson E.K."/>
            <person name="Porwollik S."/>
            <person name="Spieth J."/>
            <person name="Clifton W.S."/>
            <person name="Fulton R."/>
            <person name="Cordes M."/>
            <person name="Wollam A."/>
            <person name="Shah N."/>
            <person name="Pepin K."/>
            <person name="Bhonagiri V."/>
            <person name="Nash W."/>
            <person name="Johnson M."/>
            <person name="Thiruvilangam P."/>
            <person name="Wilson R."/>
        </authorList>
    </citation>
    <scope>NUCLEOTIDE SEQUENCE [LARGE SCALE GENOMIC DNA]</scope>
    <source>
        <strain>ATCC BAA-1250 / SPB7</strain>
    </source>
</reference>